<protein>
    <recommendedName>
        <fullName evidence="1">ATP synthase epsilon chain, chloroplastic</fullName>
    </recommendedName>
    <alternativeName>
        <fullName evidence="1">ATP synthase F1 sector epsilon subunit</fullName>
    </alternativeName>
    <alternativeName>
        <fullName evidence="1">F-ATPase epsilon subunit</fullName>
    </alternativeName>
</protein>
<keyword id="KW-0066">ATP synthesis</keyword>
<keyword id="KW-0139">CF(1)</keyword>
<keyword id="KW-0150">Chloroplast</keyword>
<keyword id="KW-0375">Hydrogen ion transport</keyword>
<keyword id="KW-0406">Ion transport</keyword>
<keyword id="KW-0472">Membrane</keyword>
<keyword id="KW-0934">Plastid</keyword>
<keyword id="KW-0793">Thylakoid</keyword>
<keyword id="KW-0813">Transport</keyword>
<feature type="chain" id="PRO_0000188277" description="ATP synthase epsilon chain, chloroplastic">
    <location>
        <begin position="1"/>
        <end position="134"/>
    </location>
</feature>
<sequence length="134" mass="14716">MTLNLCVLTPNRIIWDSEVKEIILSTNSGQIGVLPNHAPIATAIDIGILRIRLDDQWLTMALMGGFARIGNNEITILVNDAEKGSDIDPQEAQRTLEIAEANLSKAEGKRQVIEANLALRRARARVEAINAISY</sequence>
<proteinExistence type="inferred from homology"/>
<comment type="function">
    <text evidence="1">Produces ATP from ADP in the presence of a proton gradient across the membrane.</text>
</comment>
<comment type="subunit">
    <text evidence="1">F-type ATPases have 2 components, CF(1) - the catalytic core - and CF(0) - the membrane proton channel. CF(1) has five subunits: alpha(3), beta(3), gamma(1), delta(1), epsilon(1). CF(0) has three main subunits: a, b and c.</text>
</comment>
<comment type="subcellular location">
    <subcellularLocation>
        <location evidence="1">Plastid</location>
        <location evidence="1">Chloroplast thylakoid membrane</location>
        <topology evidence="1">Peripheral membrane protein</topology>
    </subcellularLocation>
</comment>
<comment type="similarity">
    <text evidence="1">Belongs to the ATPase epsilon chain family.</text>
</comment>
<organism>
    <name type="scientific">Nymphaea alba</name>
    <name type="common">White water-lily</name>
    <name type="synonym">Castalia alba</name>
    <dbReference type="NCBI Taxonomy" id="34301"/>
    <lineage>
        <taxon>Eukaryota</taxon>
        <taxon>Viridiplantae</taxon>
        <taxon>Streptophyta</taxon>
        <taxon>Embryophyta</taxon>
        <taxon>Tracheophyta</taxon>
        <taxon>Spermatophyta</taxon>
        <taxon>Magnoliopsida</taxon>
        <taxon>Nymphaeales</taxon>
        <taxon>Nymphaeaceae</taxon>
        <taxon>Nymphaea</taxon>
    </lineage>
</organism>
<geneLocation type="chloroplast"/>
<evidence type="ECO:0000255" key="1">
    <source>
        <dbReference type="HAMAP-Rule" id="MF_00530"/>
    </source>
</evidence>
<accession>Q6EW73</accession>
<gene>
    <name evidence="1" type="primary">atpE</name>
</gene>
<name>ATPE_NYMAL</name>
<reference key="1">
    <citation type="journal article" date="2004" name="Mol. Biol. Evol.">
        <title>The chloroplast genome of Nymphaea alba: whole-genome analyses and the problem of identifying the most basal angiosperm.</title>
        <authorList>
            <person name="Goremykin V.V."/>
            <person name="Hirsch-Ernst K.I."/>
            <person name="Woelfl S."/>
            <person name="Hellwig F.H."/>
        </authorList>
    </citation>
    <scope>NUCLEOTIDE SEQUENCE [LARGE SCALE GENOMIC DNA]</scope>
</reference>
<dbReference type="EMBL" id="AJ627251">
    <property type="protein sequence ID" value="CAF28599.1"/>
    <property type="molecule type" value="Genomic_DNA"/>
</dbReference>
<dbReference type="RefSeq" id="YP_053161.1">
    <property type="nucleotide sequence ID" value="NC_006050.1"/>
</dbReference>
<dbReference type="SMR" id="Q6EW73"/>
<dbReference type="GeneID" id="2896264"/>
<dbReference type="GO" id="GO:0009535">
    <property type="term" value="C:chloroplast thylakoid membrane"/>
    <property type="evidence" value="ECO:0007669"/>
    <property type="project" value="UniProtKB-SubCell"/>
</dbReference>
<dbReference type="GO" id="GO:0045259">
    <property type="term" value="C:proton-transporting ATP synthase complex"/>
    <property type="evidence" value="ECO:0007669"/>
    <property type="project" value="UniProtKB-KW"/>
</dbReference>
<dbReference type="GO" id="GO:0005524">
    <property type="term" value="F:ATP binding"/>
    <property type="evidence" value="ECO:0007669"/>
    <property type="project" value="UniProtKB-UniRule"/>
</dbReference>
<dbReference type="GO" id="GO:0046933">
    <property type="term" value="F:proton-transporting ATP synthase activity, rotational mechanism"/>
    <property type="evidence" value="ECO:0007669"/>
    <property type="project" value="UniProtKB-UniRule"/>
</dbReference>
<dbReference type="CDD" id="cd12152">
    <property type="entry name" value="F1-ATPase_delta"/>
    <property type="match status" value="1"/>
</dbReference>
<dbReference type="FunFam" id="2.60.15.10:FF:000002">
    <property type="entry name" value="ATP synthase epsilon chain, chloroplastic"/>
    <property type="match status" value="1"/>
</dbReference>
<dbReference type="Gene3D" id="6.10.140.480">
    <property type="match status" value="1"/>
</dbReference>
<dbReference type="Gene3D" id="2.60.15.10">
    <property type="entry name" value="F0F1 ATP synthase delta/epsilon subunit, N-terminal"/>
    <property type="match status" value="1"/>
</dbReference>
<dbReference type="HAMAP" id="MF_00530">
    <property type="entry name" value="ATP_synth_epsil_bac"/>
    <property type="match status" value="1"/>
</dbReference>
<dbReference type="InterPro" id="IPR001469">
    <property type="entry name" value="ATP_synth_F1_dsu/esu"/>
</dbReference>
<dbReference type="InterPro" id="IPR020546">
    <property type="entry name" value="ATP_synth_F1_dsu/esu_N"/>
</dbReference>
<dbReference type="InterPro" id="IPR020547">
    <property type="entry name" value="ATP_synth_F1_esu_C"/>
</dbReference>
<dbReference type="InterPro" id="IPR036771">
    <property type="entry name" value="ATPsynth_dsu/esu_N"/>
</dbReference>
<dbReference type="NCBIfam" id="TIGR01216">
    <property type="entry name" value="ATP_synt_epsi"/>
    <property type="match status" value="1"/>
</dbReference>
<dbReference type="PANTHER" id="PTHR13822">
    <property type="entry name" value="ATP SYNTHASE DELTA/EPSILON CHAIN"/>
    <property type="match status" value="1"/>
</dbReference>
<dbReference type="PANTHER" id="PTHR13822:SF10">
    <property type="entry name" value="ATP SYNTHASE EPSILON CHAIN, CHLOROPLASTIC"/>
    <property type="match status" value="1"/>
</dbReference>
<dbReference type="Pfam" id="PF00401">
    <property type="entry name" value="ATP-synt_DE"/>
    <property type="match status" value="1"/>
</dbReference>
<dbReference type="Pfam" id="PF02823">
    <property type="entry name" value="ATP-synt_DE_N"/>
    <property type="match status" value="1"/>
</dbReference>
<dbReference type="SUPFAM" id="SSF51344">
    <property type="entry name" value="Epsilon subunit of F1F0-ATP synthase N-terminal domain"/>
    <property type="match status" value="1"/>
</dbReference>